<proteinExistence type="evidence at protein level"/>
<feature type="chain" id="PRO_0000276047" description="Photosystem I reaction center subunit VIII">
    <location>
        <begin position="1"/>
        <end position="36"/>
    </location>
</feature>
<feature type="transmembrane region" description="Helical" evidence="1">
    <location>
        <begin position="9"/>
        <end position="29"/>
    </location>
</feature>
<feature type="helix" evidence="2">
    <location>
        <begin position="3"/>
        <end position="5"/>
    </location>
</feature>
<feature type="helix" evidence="2">
    <location>
        <begin position="6"/>
        <end position="15"/>
    </location>
</feature>
<feature type="helix" evidence="2">
    <location>
        <begin position="17"/>
        <end position="31"/>
    </location>
</feature>
<reference key="1">
    <citation type="journal article" date="2007" name="Mol. Genet. Genomics">
        <title>Chloroplast genomes of the diatoms Phaeodactylum tricornutum and Thalassiosira pseudonana: comparison with other plastid genomes of the red lineage.</title>
        <authorList>
            <person name="Oudot-Le Secq M.-P."/>
            <person name="Grimwood J."/>
            <person name="Shapiro H."/>
            <person name="Armbrust E.V."/>
            <person name="Bowler C."/>
            <person name="Green B.R."/>
        </authorList>
    </citation>
    <scope>NUCLEOTIDE SEQUENCE [LARGE SCALE GENOMIC DNA]</scope>
    <source>
        <strain>CCMP1335 / NEPCC58 / CCAP 1085/12</strain>
    </source>
</reference>
<keyword id="KW-0002">3D-structure</keyword>
<keyword id="KW-0150">Chloroplast</keyword>
<keyword id="KW-0472">Membrane</keyword>
<keyword id="KW-0602">Photosynthesis</keyword>
<keyword id="KW-0603">Photosystem I</keyword>
<keyword id="KW-0934">Plastid</keyword>
<keyword id="KW-0793">Thylakoid</keyword>
<keyword id="KW-0812">Transmembrane</keyword>
<keyword id="KW-1133">Transmembrane helix</keyword>
<geneLocation type="chloroplast"/>
<protein>
    <recommendedName>
        <fullName evidence="1">Photosystem I reaction center subunit VIII</fullName>
        <shortName evidence="1">PSI-I</shortName>
    </recommendedName>
</protein>
<gene>
    <name evidence="1" type="primary">psaI</name>
</gene>
<comment type="function">
    <text evidence="1">May help in the organization of the PsaL subunit.</text>
</comment>
<comment type="subcellular location">
    <subcellularLocation>
        <location evidence="1">Plastid</location>
        <location evidence="1">Chloroplast thylakoid membrane</location>
        <topology evidence="1">Single-pass membrane protein</topology>
    </subcellularLocation>
</comment>
<comment type="similarity">
    <text evidence="1">Belongs to the PsaI family.</text>
</comment>
<evidence type="ECO:0000255" key="1">
    <source>
        <dbReference type="HAMAP-Rule" id="MF_00431"/>
    </source>
</evidence>
<evidence type="ECO:0007829" key="2">
    <source>
        <dbReference type="PDB" id="8XLS"/>
    </source>
</evidence>
<sequence length="36" mass="3920">MAASFLPSILVPLVGLIFPAFSMALFFLYVQTDDIA</sequence>
<dbReference type="EMBL" id="EF067921">
    <property type="protein sequence ID" value="ABK20764.1"/>
    <property type="molecule type" value="Genomic_DNA"/>
</dbReference>
<dbReference type="RefSeq" id="YP_874541.1">
    <property type="nucleotide sequence ID" value="NC_008589.1"/>
</dbReference>
<dbReference type="PDB" id="8XLS">
    <property type="method" value="EM"/>
    <property type="resolution" value="2.30 A"/>
    <property type="chains" value="I=1-36"/>
</dbReference>
<dbReference type="PDB" id="8ZEH">
    <property type="method" value="EM"/>
    <property type="resolution" value="2.78 A"/>
    <property type="chains" value="i=2-34"/>
</dbReference>
<dbReference type="PDB" id="8ZET">
    <property type="method" value="EM"/>
    <property type="resolution" value="3.20 A"/>
    <property type="chains" value="i=2-34"/>
</dbReference>
<dbReference type="PDBsum" id="8XLS"/>
<dbReference type="PDBsum" id="8ZEH"/>
<dbReference type="PDBsum" id="8ZET"/>
<dbReference type="EMDB" id="EMD-38457"/>
<dbReference type="EMDB" id="EMD-60032"/>
<dbReference type="EMDB" id="EMD-60044"/>
<dbReference type="SMR" id="A0T0S9"/>
<dbReference type="STRING" id="35128.A0T0S9"/>
<dbReference type="GeneID" id="4524784"/>
<dbReference type="InParanoid" id="A0T0S9"/>
<dbReference type="GO" id="GO:0009535">
    <property type="term" value="C:chloroplast thylakoid membrane"/>
    <property type="evidence" value="ECO:0007669"/>
    <property type="project" value="UniProtKB-SubCell"/>
</dbReference>
<dbReference type="GO" id="GO:0009522">
    <property type="term" value="C:photosystem I"/>
    <property type="evidence" value="ECO:0007669"/>
    <property type="project" value="UniProtKB-KW"/>
</dbReference>
<dbReference type="GO" id="GO:0015979">
    <property type="term" value="P:photosynthesis"/>
    <property type="evidence" value="ECO:0007669"/>
    <property type="project" value="UniProtKB-UniRule"/>
</dbReference>
<dbReference type="HAMAP" id="MF_00431">
    <property type="entry name" value="PSI_PsaI"/>
    <property type="match status" value="1"/>
</dbReference>
<dbReference type="InterPro" id="IPR001302">
    <property type="entry name" value="PSI_PsaI"/>
</dbReference>
<dbReference type="InterPro" id="IPR036357">
    <property type="entry name" value="PSI_PsaI_sf"/>
</dbReference>
<dbReference type="NCBIfam" id="TIGR03052">
    <property type="entry name" value="PS_I_psaI"/>
    <property type="match status" value="1"/>
</dbReference>
<dbReference type="PANTHER" id="PTHR35775">
    <property type="match status" value="1"/>
</dbReference>
<dbReference type="PANTHER" id="PTHR35775:SF2">
    <property type="entry name" value="PHOTOSYSTEM I REACTION CENTER SUBUNIT VIII"/>
    <property type="match status" value="1"/>
</dbReference>
<dbReference type="Pfam" id="PF00796">
    <property type="entry name" value="PSI_8"/>
    <property type="match status" value="1"/>
</dbReference>
<dbReference type="SUPFAM" id="SSF81540">
    <property type="entry name" value="Subunit VIII of photosystem I reaction centre, PsaI"/>
    <property type="match status" value="1"/>
</dbReference>
<accession>A0T0S9</accession>
<organism>
    <name type="scientific">Thalassiosira pseudonana</name>
    <name type="common">Marine diatom</name>
    <name type="synonym">Cyclotella nana</name>
    <dbReference type="NCBI Taxonomy" id="35128"/>
    <lineage>
        <taxon>Eukaryota</taxon>
        <taxon>Sar</taxon>
        <taxon>Stramenopiles</taxon>
        <taxon>Ochrophyta</taxon>
        <taxon>Bacillariophyta</taxon>
        <taxon>Coscinodiscophyceae</taxon>
        <taxon>Thalassiosirophycidae</taxon>
        <taxon>Thalassiosirales</taxon>
        <taxon>Thalassiosiraceae</taxon>
        <taxon>Thalassiosira</taxon>
    </lineage>
</organism>
<name>PSAI_THAPS</name>